<comment type="function">
    <text evidence="1">Part of the Rad50/Mre11 complex, which is involved in the early steps of DNA double-strand break (DSB) repair. The complex may facilitate opening of the processed DNA ends to aid in the recruitment of HerA and NurA. Rad50 controls the balance between DNA end bridging and DNA resection via ATP-dependent structural rearrangements of the Rad50/Mre11 complex.</text>
</comment>
<comment type="cofactor">
    <cofactor evidence="1">
        <name>Zn(2+)</name>
        <dbReference type="ChEBI" id="CHEBI:29105"/>
    </cofactor>
    <text evidence="1">Binds 1 zinc ion per homodimer.</text>
</comment>
<comment type="subunit">
    <text evidence="1">Homodimer. Forms a heterotetramer composed of two Mre11 subunits and two Rad50 subunits.</text>
</comment>
<comment type="induction">
    <text evidence="2">Part of the nurA-rad50-mre11-herA operon, these genes are cotranscribed.</text>
</comment>
<comment type="domain">
    <text evidence="1">The two conserved Cys that bind zinc constitute the zinc-hook, which separates the large intramolecular coiled coil regions. The 2 Cys residues coordinate one molecule of zinc with the help of the 2 Cys residues of the zinc-hook of another Rad50 molecule, thereby forming a V-shaped homodimer.</text>
</comment>
<comment type="similarity">
    <text evidence="1">Belongs to the SMC family. RAD50 subfamily.</text>
</comment>
<protein>
    <recommendedName>
        <fullName evidence="1">DNA double-strand break repair Rad50 ATPase</fullName>
    </recommendedName>
</protein>
<reference key="1">
    <citation type="journal article" date="2001" name="DNA Res.">
        <title>Complete genome sequence of an aerobic thermoacidophilic Crenarchaeon, Sulfolobus tokodaii strain7.</title>
        <authorList>
            <person name="Kawarabayasi Y."/>
            <person name="Hino Y."/>
            <person name="Horikawa H."/>
            <person name="Jin-no K."/>
            <person name="Takahashi M."/>
            <person name="Sekine M."/>
            <person name="Baba S."/>
            <person name="Ankai A."/>
            <person name="Kosugi H."/>
            <person name="Hosoyama A."/>
            <person name="Fukui S."/>
            <person name="Nagai Y."/>
            <person name="Nishijima K."/>
            <person name="Otsuka R."/>
            <person name="Nakazawa H."/>
            <person name="Takamiya M."/>
            <person name="Kato Y."/>
            <person name="Yoshizawa T."/>
            <person name="Tanaka T."/>
            <person name="Kudoh Y."/>
            <person name="Yamazaki J."/>
            <person name="Kushida N."/>
            <person name="Oguchi A."/>
            <person name="Aoki K."/>
            <person name="Masuda S."/>
            <person name="Yanagii M."/>
            <person name="Nishimura M."/>
            <person name="Yamagishi A."/>
            <person name="Oshima T."/>
            <person name="Kikuchi H."/>
        </authorList>
    </citation>
    <scope>NUCLEOTIDE SEQUENCE [LARGE SCALE GENOMIC DNA]</scope>
    <source>
        <strain>DSM 16993 / JCM 10545 / NBRC 100140 / 7</strain>
    </source>
</reference>
<reference key="2">
    <citation type="journal article" date="2008" name="DNA Repair">
        <title>Archaeal DNA helicase HerA interacts with Mre11 homologue and unwinds blunt-ended double-stranded DNA and recombination intermediates.</title>
        <authorList>
            <person name="Zhang S."/>
            <person name="Wei T."/>
            <person name="Hou G."/>
            <person name="Zhang C."/>
            <person name="Liang P."/>
            <person name="Ni J."/>
            <person name="Sheng D."/>
            <person name="Shen Y."/>
        </authorList>
    </citation>
    <scope>INDUCTION</scope>
</reference>
<dbReference type="EMBL" id="BA000023">
    <property type="protein sequence ID" value="BAK54735.1"/>
    <property type="molecule type" value="Genomic_DNA"/>
</dbReference>
<dbReference type="RefSeq" id="WP_052846723.1">
    <property type="nucleotide sequence ID" value="NC_003106.2"/>
</dbReference>
<dbReference type="SMR" id="Q96YR5"/>
<dbReference type="STRING" id="273063.STK_21080"/>
<dbReference type="GeneID" id="1460180"/>
<dbReference type="KEGG" id="sto:STK_21080"/>
<dbReference type="PATRIC" id="fig|273063.9.peg.2400"/>
<dbReference type="eggNOG" id="arCOG00368">
    <property type="taxonomic scope" value="Archaea"/>
</dbReference>
<dbReference type="OrthoDB" id="25344at2157"/>
<dbReference type="Proteomes" id="UP000001015">
    <property type="component" value="Chromosome"/>
</dbReference>
<dbReference type="GO" id="GO:0005524">
    <property type="term" value="F:ATP binding"/>
    <property type="evidence" value="ECO:0007669"/>
    <property type="project" value="UniProtKB-UniRule"/>
</dbReference>
<dbReference type="GO" id="GO:0016887">
    <property type="term" value="F:ATP hydrolysis activity"/>
    <property type="evidence" value="ECO:0007669"/>
    <property type="project" value="UniProtKB-UniRule"/>
</dbReference>
<dbReference type="GO" id="GO:0008270">
    <property type="term" value="F:zinc ion binding"/>
    <property type="evidence" value="ECO:0007669"/>
    <property type="project" value="UniProtKB-UniRule"/>
</dbReference>
<dbReference type="GO" id="GO:0006302">
    <property type="term" value="P:double-strand break repair"/>
    <property type="evidence" value="ECO:0007669"/>
    <property type="project" value="UniProtKB-UniRule"/>
</dbReference>
<dbReference type="Gene3D" id="1.10.287.510">
    <property type="entry name" value="Helix hairpin bin"/>
    <property type="match status" value="1"/>
</dbReference>
<dbReference type="Gene3D" id="3.40.50.300">
    <property type="entry name" value="P-loop containing nucleotide triphosphate hydrolases"/>
    <property type="match status" value="2"/>
</dbReference>
<dbReference type="HAMAP" id="MF_00449">
    <property type="entry name" value="RAD50"/>
    <property type="match status" value="1"/>
</dbReference>
<dbReference type="InterPro" id="IPR027417">
    <property type="entry name" value="P-loop_NTPase"/>
</dbReference>
<dbReference type="InterPro" id="IPR038729">
    <property type="entry name" value="Rad50/SbcC_AAA"/>
</dbReference>
<dbReference type="InterPro" id="IPR022982">
    <property type="entry name" value="Rad50_ATPase_archaeal"/>
</dbReference>
<dbReference type="InterPro" id="IPR054990">
    <property type="entry name" value="Rad50_ATPase_DNA_repair"/>
</dbReference>
<dbReference type="InterPro" id="IPR013134">
    <property type="entry name" value="Zn_hook_RAD50"/>
</dbReference>
<dbReference type="NCBIfam" id="NF041034">
    <property type="entry name" value="Rad50_Sulf"/>
    <property type="match status" value="1"/>
</dbReference>
<dbReference type="PANTHER" id="PTHR32114">
    <property type="entry name" value="ABC TRANSPORTER ABCH.3"/>
    <property type="match status" value="1"/>
</dbReference>
<dbReference type="PANTHER" id="PTHR32114:SF2">
    <property type="entry name" value="ABC TRANSPORTER ABCH.3"/>
    <property type="match status" value="1"/>
</dbReference>
<dbReference type="Pfam" id="PF13476">
    <property type="entry name" value="AAA_23"/>
    <property type="match status" value="1"/>
</dbReference>
<dbReference type="Pfam" id="PF04423">
    <property type="entry name" value="Rad50_zn_hook"/>
    <property type="match status" value="1"/>
</dbReference>
<dbReference type="SUPFAM" id="SSF52540">
    <property type="entry name" value="P-loop containing nucleoside triphosphate hydrolases"/>
    <property type="match status" value="2"/>
</dbReference>
<dbReference type="SUPFAM" id="SSF75712">
    <property type="entry name" value="Rad50 coiled-coil Zn hook"/>
    <property type="match status" value="1"/>
</dbReference>
<dbReference type="PROSITE" id="PS51131">
    <property type="entry name" value="ZN_HOOK"/>
    <property type="match status" value="1"/>
</dbReference>
<accession>Q96YR5</accession>
<accession>F9VP88</accession>
<evidence type="ECO:0000255" key="1">
    <source>
        <dbReference type="HAMAP-Rule" id="MF_00449"/>
    </source>
</evidence>
<evidence type="ECO:0000269" key="2">
    <source>
    </source>
</evidence>
<feature type="chain" id="PRO_0000138666" description="DNA double-strand break repair Rad50 ATPase">
    <location>
        <begin position="1"/>
        <end position="879"/>
    </location>
</feature>
<feature type="domain" description="Zinc-hook" evidence="1">
    <location>
        <begin position="394"/>
        <end position="492"/>
    </location>
</feature>
<feature type="coiled-coil region" evidence="1">
    <location>
        <begin position="184"/>
        <end position="304"/>
    </location>
</feature>
<feature type="coiled-coil region" evidence="1">
    <location>
        <begin position="342"/>
        <end position="436"/>
    </location>
</feature>
<feature type="coiled-coil region" evidence="1">
    <location>
        <begin position="502"/>
        <end position="722"/>
    </location>
</feature>
<feature type="binding site" evidence="1">
    <location>
        <begin position="32"/>
        <end position="38"/>
    </location>
    <ligand>
        <name>ATP</name>
        <dbReference type="ChEBI" id="CHEBI:30616"/>
    </ligand>
</feature>
<feature type="binding site" evidence="1">
    <location>
        <position position="139"/>
    </location>
    <ligand>
        <name>ATP</name>
        <dbReference type="ChEBI" id="CHEBI:30616"/>
    </ligand>
</feature>
<feature type="binding site" evidence="1">
    <location>
        <position position="440"/>
    </location>
    <ligand>
        <name>Zn(2+)</name>
        <dbReference type="ChEBI" id="CHEBI:29105"/>
    </ligand>
</feature>
<feature type="binding site" evidence="1">
    <location>
        <position position="443"/>
    </location>
    <ligand>
        <name>Zn(2+)</name>
        <dbReference type="ChEBI" id="CHEBI:29105"/>
    </ligand>
</feature>
<feature type="binding site" evidence="1">
    <location>
        <begin position="786"/>
        <end position="791"/>
    </location>
    <ligand>
        <name>ATP</name>
        <dbReference type="ChEBI" id="CHEBI:30616"/>
    </ligand>
</feature>
<keyword id="KW-0067">ATP-binding</keyword>
<keyword id="KW-0175">Coiled coil</keyword>
<keyword id="KW-0227">DNA damage</keyword>
<keyword id="KW-0234">DNA repair</keyword>
<keyword id="KW-0378">Hydrolase</keyword>
<keyword id="KW-0479">Metal-binding</keyword>
<keyword id="KW-0547">Nucleotide-binding</keyword>
<keyword id="KW-1185">Reference proteome</keyword>
<keyword id="KW-0862">Zinc</keyword>
<proteinExistence type="evidence at transcript level"/>
<gene>
    <name evidence="1" type="primary">rad50</name>
    <name type="ordered locus">STK_21080</name>
</gene>
<name>RAD50_SULTO</name>
<sequence>MIIRRIDIENFLSHDRSLIEFKGTVNVIIGHNGAGKSSIIDAISFSLFRKSLRDAKKQEDLIKRGAGRATVTLYLENKGKIYVIKRNAPNQYTSEDTISELTNDTRRTIARGATTVSQKIKELLNLDEEVLKSTIIVGQGKIESVFENLPDVTKKILKIDKIEKLRDSNGPIKEVMDKINNKIIELQSLEKYKNESENQKIQKEKELENIKRELEDLNIKEEKERKKYEDIVKLNEEEEKKEKRYVELISLLNKLKDDISELREEVKDENRLREEKEKLEKDILEKDKLIEEKEKIIEAQNKIKLAQEKEKSLKTIKINLTDLEEKLKRKRELEEDYKKYIEIKGELEELEEKERKFNSLSDRLKSLKIKLSEIESKISNRKISINIEELDKELQKLNEDLNNKNQEREKLASQLGEIKGRIEELNKLLGNLNQVKGNVCPVCGRELSDDHKRKIQNEIIEKLKELDELNKKFKLEINKINGLISELNQIINKKSKEKDIAIRNLADYNNLLTQQQELRKEIEEIENEIERLSIYHEKYIRLKEEEKNLKPKYEEYLKYYDVTEEKIRELERQKIELEKEIEEIMNKVREYYNTDLTQKIRDIEKRIQEIKGKENKLRELDTLLAKIETAKQKIKQNEEEIKKLTDELQLLNFDPNRFQQIKREKEVLEKILGEINSKKGELLGKKEVLENDIKRLEEQIKDYEEKLKNKQKLITAYDKLKKLREHLAEDKLQAYLMNTVKSLVEDSLNSILSRFELSFTRVEVDFNDKNGIYAYTTSGQRLPVNLLSGGERVSIALALRLAIAKSLMNEVGFLILDEPTVNLDEYRKKELIDIIRSTVEVVPQIIVVTHDEELLQAGDYIIRLEKRGDSSKVEVINND</sequence>
<organism>
    <name type="scientific">Sulfurisphaera tokodaii (strain DSM 16993 / JCM 10545 / NBRC 100140 / 7)</name>
    <name type="common">Sulfolobus tokodaii</name>
    <dbReference type="NCBI Taxonomy" id="273063"/>
    <lineage>
        <taxon>Archaea</taxon>
        <taxon>Thermoproteota</taxon>
        <taxon>Thermoprotei</taxon>
        <taxon>Sulfolobales</taxon>
        <taxon>Sulfolobaceae</taxon>
        <taxon>Sulfurisphaera</taxon>
    </lineage>
</organism>